<reference key="1">
    <citation type="journal article" date="2002" name="Nature">
        <title>The genome sequence of Schizosaccharomyces pombe.</title>
        <authorList>
            <person name="Wood V."/>
            <person name="Gwilliam R."/>
            <person name="Rajandream M.A."/>
            <person name="Lyne M.H."/>
            <person name="Lyne R."/>
            <person name="Stewart A."/>
            <person name="Sgouros J.G."/>
            <person name="Peat N."/>
            <person name="Hayles J."/>
            <person name="Baker S.G."/>
            <person name="Basham D."/>
            <person name="Bowman S."/>
            <person name="Brooks K."/>
            <person name="Brown D."/>
            <person name="Brown S."/>
            <person name="Chillingworth T."/>
            <person name="Churcher C.M."/>
            <person name="Collins M."/>
            <person name="Connor R."/>
            <person name="Cronin A."/>
            <person name="Davis P."/>
            <person name="Feltwell T."/>
            <person name="Fraser A."/>
            <person name="Gentles S."/>
            <person name="Goble A."/>
            <person name="Hamlin N."/>
            <person name="Harris D.E."/>
            <person name="Hidalgo J."/>
            <person name="Hodgson G."/>
            <person name="Holroyd S."/>
            <person name="Hornsby T."/>
            <person name="Howarth S."/>
            <person name="Huckle E.J."/>
            <person name="Hunt S."/>
            <person name="Jagels K."/>
            <person name="James K.D."/>
            <person name="Jones L."/>
            <person name="Jones M."/>
            <person name="Leather S."/>
            <person name="McDonald S."/>
            <person name="McLean J."/>
            <person name="Mooney P."/>
            <person name="Moule S."/>
            <person name="Mungall K.L."/>
            <person name="Murphy L.D."/>
            <person name="Niblett D."/>
            <person name="Odell C."/>
            <person name="Oliver K."/>
            <person name="O'Neil S."/>
            <person name="Pearson D."/>
            <person name="Quail M.A."/>
            <person name="Rabbinowitsch E."/>
            <person name="Rutherford K.M."/>
            <person name="Rutter S."/>
            <person name="Saunders D."/>
            <person name="Seeger K."/>
            <person name="Sharp S."/>
            <person name="Skelton J."/>
            <person name="Simmonds M.N."/>
            <person name="Squares R."/>
            <person name="Squares S."/>
            <person name="Stevens K."/>
            <person name="Taylor K."/>
            <person name="Taylor R.G."/>
            <person name="Tivey A."/>
            <person name="Walsh S.V."/>
            <person name="Warren T."/>
            <person name="Whitehead S."/>
            <person name="Woodward J.R."/>
            <person name="Volckaert G."/>
            <person name="Aert R."/>
            <person name="Robben J."/>
            <person name="Grymonprez B."/>
            <person name="Weltjens I."/>
            <person name="Vanstreels E."/>
            <person name="Rieger M."/>
            <person name="Schaefer M."/>
            <person name="Mueller-Auer S."/>
            <person name="Gabel C."/>
            <person name="Fuchs M."/>
            <person name="Duesterhoeft A."/>
            <person name="Fritzc C."/>
            <person name="Holzer E."/>
            <person name="Moestl D."/>
            <person name="Hilbert H."/>
            <person name="Borzym K."/>
            <person name="Langer I."/>
            <person name="Beck A."/>
            <person name="Lehrach H."/>
            <person name="Reinhardt R."/>
            <person name="Pohl T.M."/>
            <person name="Eger P."/>
            <person name="Zimmermann W."/>
            <person name="Wedler H."/>
            <person name="Wambutt R."/>
            <person name="Purnelle B."/>
            <person name="Goffeau A."/>
            <person name="Cadieu E."/>
            <person name="Dreano S."/>
            <person name="Gloux S."/>
            <person name="Lelaure V."/>
            <person name="Mottier S."/>
            <person name="Galibert F."/>
            <person name="Aves S.J."/>
            <person name="Xiang Z."/>
            <person name="Hunt C."/>
            <person name="Moore K."/>
            <person name="Hurst S.M."/>
            <person name="Lucas M."/>
            <person name="Rochet M."/>
            <person name="Gaillardin C."/>
            <person name="Tallada V.A."/>
            <person name="Garzon A."/>
            <person name="Thode G."/>
            <person name="Daga R.R."/>
            <person name="Cruzado L."/>
            <person name="Jimenez J."/>
            <person name="Sanchez M."/>
            <person name="del Rey F."/>
            <person name="Benito J."/>
            <person name="Dominguez A."/>
            <person name="Revuelta J.L."/>
            <person name="Moreno S."/>
            <person name="Armstrong J."/>
            <person name="Forsburg S.L."/>
            <person name="Cerutti L."/>
            <person name="Lowe T."/>
            <person name="McCombie W.R."/>
            <person name="Paulsen I."/>
            <person name="Potashkin J."/>
            <person name="Shpakovski G.V."/>
            <person name="Ussery D."/>
            <person name="Barrell B.G."/>
            <person name="Nurse P."/>
        </authorList>
    </citation>
    <scope>NUCLEOTIDE SEQUENCE [LARGE SCALE GENOMIC DNA]</scope>
    <source>
        <strain>972 / ATCC 24843</strain>
    </source>
</reference>
<reference key="2">
    <citation type="journal article" date="2004" name="J. Biol. Chem.">
        <title>Five genes involved in biosynthesis of the pyruvylated Galbeta1,3-epitope in Schizosaccharomyces pombe N-linked glycans.</title>
        <authorList>
            <person name="Andreishcheva E.N."/>
            <person name="Kunkel J.P."/>
            <person name="Gemmill T.R."/>
            <person name="Trimble R.B."/>
        </authorList>
    </citation>
    <scope>FUNCTION</scope>
</reference>
<keyword id="KW-0002">3D-structure</keyword>
<keyword id="KW-0961">Cell wall biogenesis/degradation</keyword>
<keyword id="KW-1185">Reference proteome</keyword>
<keyword id="KW-0732">Signal</keyword>
<keyword id="KW-0808">Transferase</keyword>
<proteinExistence type="evidence at protein level"/>
<feature type="signal peptide" evidence="1">
    <location>
        <begin position="1"/>
        <end position="30"/>
    </location>
</feature>
<feature type="chain" id="PRO_0000029851" description="Pyruvyl transferase 1">
    <location>
        <begin position="31"/>
        <end position="401"/>
    </location>
</feature>
<feature type="region of interest" description="Disordered" evidence="2">
    <location>
        <begin position="38"/>
        <end position="64"/>
    </location>
</feature>
<feature type="compositionally biased region" description="Low complexity" evidence="2">
    <location>
        <begin position="39"/>
        <end position="50"/>
    </location>
</feature>
<feature type="helix" evidence="5">
    <location>
        <begin position="62"/>
        <end position="86"/>
    </location>
</feature>
<feature type="turn" evidence="5">
    <location>
        <begin position="87"/>
        <end position="89"/>
    </location>
</feature>
<feature type="strand" evidence="5">
    <location>
        <begin position="92"/>
        <end position="97"/>
    </location>
</feature>
<feature type="helix" evidence="5">
    <location>
        <begin position="104"/>
        <end position="119"/>
    </location>
</feature>
<feature type="strand" evidence="5">
    <location>
        <begin position="123"/>
        <end position="130"/>
    </location>
</feature>
<feature type="turn" evidence="5">
    <location>
        <begin position="131"/>
        <end position="133"/>
    </location>
</feature>
<feature type="helix" evidence="5">
    <location>
        <begin position="136"/>
        <end position="144"/>
    </location>
</feature>
<feature type="helix" evidence="5">
    <location>
        <begin position="148"/>
        <end position="150"/>
    </location>
</feature>
<feature type="strand" evidence="5">
    <location>
        <begin position="151"/>
        <end position="155"/>
    </location>
</feature>
<feature type="strand" evidence="5">
    <location>
        <begin position="158"/>
        <end position="162"/>
    </location>
</feature>
<feature type="helix" evidence="5">
    <location>
        <begin position="166"/>
        <end position="178"/>
    </location>
</feature>
<feature type="strand" evidence="5">
    <location>
        <begin position="181"/>
        <end position="186"/>
    </location>
</feature>
<feature type="strand" evidence="5">
    <location>
        <begin position="188"/>
        <end position="192"/>
    </location>
</feature>
<feature type="helix" evidence="5">
    <location>
        <begin position="196"/>
        <end position="208"/>
    </location>
</feature>
<feature type="strand" evidence="5">
    <location>
        <begin position="212"/>
        <end position="218"/>
    </location>
</feature>
<feature type="helix" evidence="5">
    <location>
        <begin position="219"/>
        <end position="229"/>
    </location>
</feature>
<feature type="turn" evidence="5">
    <location>
        <begin position="230"/>
        <end position="232"/>
    </location>
</feature>
<feature type="strand" evidence="5">
    <location>
        <begin position="235"/>
        <end position="237"/>
    </location>
</feature>
<feature type="helix" evidence="5">
    <location>
        <begin position="241"/>
        <end position="245"/>
    </location>
</feature>
<feature type="helix" evidence="5">
    <location>
        <begin position="249"/>
        <end position="254"/>
    </location>
</feature>
<feature type="strand" evidence="5">
    <location>
        <begin position="260"/>
        <end position="265"/>
    </location>
</feature>
<feature type="strand" evidence="5">
    <location>
        <begin position="297"/>
        <end position="299"/>
    </location>
</feature>
<feature type="helix" evidence="5">
    <location>
        <begin position="303"/>
        <end position="306"/>
    </location>
</feature>
<feature type="helix" evidence="5">
    <location>
        <begin position="312"/>
        <end position="328"/>
    </location>
</feature>
<feature type="strand" evidence="5">
    <location>
        <begin position="330"/>
        <end position="335"/>
    </location>
</feature>
<feature type="helix" evidence="5">
    <location>
        <begin position="338"/>
        <end position="347"/>
    </location>
</feature>
<feature type="strand" evidence="5">
    <location>
        <begin position="351"/>
        <end position="354"/>
    </location>
</feature>
<feature type="turn" evidence="5">
    <location>
        <begin position="359"/>
        <end position="362"/>
    </location>
</feature>
<feature type="helix" evidence="5">
    <location>
        <begin position="363"/>
        <end position="369"/>
    </location>
</feature>
<feature type="helix" evidence="5">
    <location>
        <begin position="371"/>
        <end position="373"/>
    </location>
</feature>
<feature type="turn" evidence="5">
    <location>
        <begin position="376"/>
        <end position="378"/>
    </location>
</feature>
<feature type="strand" evidence="5">
    <location>
        <begin position="379"/>
        <end position="384"/>
    </location>
</feature>
<feature type="helix" evidence="5">
    <location>
        <begin position="385"/>
        <end position="398"/>
    </location>
</feature>
<accession>Q9UT27</accession>
<accession>Q9P803</accession>
<name>PVG1_SCHPO</name>
<evidence type="ECO:0000255" key="1"/>
<evidence type="ECO:0000256" key="2">
    <source>
        <dbReference type="SAM" id="MobiDB-lite"/>
    </source>
</evidence>
<evidence type="ECO:0000269" key="3">
    <source>
    </source>
</evidence>
<evidence type="ECO:0000305" key="4"/>
<evidence type="ECO:0007829" key="5">
    <source>
        <dbReference type="PDB" id="5AX7"/>
    </source>
</evidence>
<comment type="function">
    <text evidence="3">Involved in cell wall biogenesis. Has a role in the addition of Gal-beta1,3 moieties to galactomannans and their subsequent pyruvylation.</text>
</comment>
<comment type="similarity">
    <text evidence="4">Belongs to the polysaccharide pyruvyl transferase family.</text>
</comment>
<organism>
    <name type="scientific">Schizosaccharomyces pombe (strain 972 / ATCC 24843)</name>
    <name type="common">Fission yeast</name>
    <dbReference type="NCBI Taxonomy" id="284812"/>
    <lineage>
        <taxon>Eukaryota</taxon>
        <taxon>Fungi</taxon>
        <taxon>Dikarya</taxon>
        <taxon>Ascomycota</taxon>
        <taxon>Taphrinomycotina</taxon>
        <taxon>Schizosaccharomycetes</taxon>
        <taxon>Schizosaccharomycetales</taxon>
        <taxon>Schizosaccharomycetaceae</taxon>
        <taxon>Schizosaccharomyces</taxon>
    </lineage>
</organism>
<dbReference type="EC" id="2.-.-.-"/>
<dbReference type="EMBL" id="CU329670">
    <property type="protein sequence ID" value="CAB52171.1"/>
    <property type="molecule type" value="Genomic_DNA"/>
</dbReference>
<dbReference type="PIR" id="T39185">
    <property type="entry name" value="T39185"/>
</dbReference>
<dbReference type="RefSeq" id="NP_593959.1">
    <property type="nucleotide sequence ID" value="NM_001019386.2"/>
</dbReference>
<dbReference type="PDB" id="5AX7">
    <property type="method" value="X-ray"/>
    <property type="resolution" value="2.46 A"/>
    <property type="chains" value="A/B=54-401"/>
</dbReference>
<dbReference type="PDBsum" id="5AX7"/>
<dbReference type="SMR" id="Q9UT27"/>
<dbReference type="BioGRID" id="279926">
    <property type="interactions" value="5"/>
</dbReference>
<dbReference type="STRING" id="284812.Q9UT27"/>
<dbReference type="iPTMnet" id="Q9UT27"/>
<dbReference type="PaxDb" id="4896-SPAC8F11.10c.1"/>
<dbReference type="EnsemblFungi" id="SPAC8F11.10c.1">
    <property type="protein sequence ID" value="SPAC8F11.10c.1:pep"/>
    <property type="gene ID" value="SPAC8F11.10c"/>
</dbReference>
<dbReference type="PomBase" id="SPAC8F11.10c">
    <property type="gene designation" value="pvg1"/>
</dbReference>
<dbReference type="VEuPathDB" id="FungiDB:SPAC8F11.10c"/>
<dbReference type="eggNOG" id="ENOG502S3FU">
    <property type="taxonomic scope" value="Eukaryota"/>
</dbReference>
<dbReference type="HOGENOM" id="CLU_045699_0_0_1"/>
<dbReference type="InParanoid" id="Q9UT27"/>
<dbReference type="OMA" id="IEMMEAC"/>
<dbReference type="PhylomeDB" id="Q9UT27"/>
<dbReference type="BioCyc" id="MetaCyc:MONOMER-20446"/>
<dbReference type="PRO" id="PR:Q9UT27"/>
<dbReference type="Proteomes" id="UP000002485">
    <property type="component" value="Chromosome I"/>
</dbReference>
<dbReference type="GO" id="GO:0005737">
    <property type="term" value="C:cytoplasm"/>
    <property type="evidence" value="ECO:0007005"/>
    <property type="project" value="PomBase"/>
</dbReference>
<dbReference type="GO" id="GO:0005794">
    <property type="term" value="C:Golgi apparatus"/>
    <property type="evidence" value="ECO:0000314"/>
    <property type="project" value="PomBase"/>
</dbReference>
<dbReference type="GO" id="GO:0046919">
    <property type="term" value="F:pyruvyltransferase activity"/>
    <property type="evidence" value="ECO:0000314"/>
    <property type="project" value="PomBase"/>
</dbReference>
<dbReference type="GO" id="GO:0051072">
    <property type="term" value="P:4,6-pyruvylated galactose residue biosynthetic process"/>
    <property type="evidence" value="ECO:0000314"/>
    <property type="project" value="PomBase"/>
</dbReference>
<dbReference type="GO" id="GO:0071555">
    <property type="term" value="P:cell wall organization"/>
    <property type="evidence" value="ECO:0007669"/>
    <property type="project" value="UniProtKB-KW"/>
</dbReference>
<dbReference type="GO" id="GO:0009272">
    <property type="term" value="P:fungal-type cell wall biogenesis"/>
    <property type="evidence" value="ECO:0000305"/>
    <property type="project" value="PomBase"/>
</dbReference>
<dbReference type="InterPro" id="IPR007345">
    <property type="entry name" value="Polysacch_pyruvyl_Trfase"/>
</dbReference>
<dbReference type="Pfam" id="PF04230">
    <property type="entry name" value="PS_pyruv_trans"/>
    <property type="match status" value="1"/>
</dbReference>
<sequence>MFANINIRKSVWLFLLAAVSCTLFIYGVTRTDLQTLKNPSSLTSPSSSTSVDKKKPLFTKSPRNSASCESTITLQSNLLFTYYKHYFAGIKKVALIGFPDHPNKGDSAIYVAEKKLLDALNIEVVYITAQEADYSASELKSIISDIPRDEFALAFHGGGNFGDLYPDHQHLRELVVRDFPSFTTISFPQSVWYNEQQLLEQASILYAENPNITLVTRDRQSYGFAVDAFGKHNEVLLTPDIVFFMGPIPEIREATPITHDVLILARLDHEGGQQHGAEDYYRDTLNAANLTYSVEDWLLWDPPVAQNPDSSFDDRGQARYEAGAEFLASARVVITDRLHAHILSTLMGIPHIVVENSQMGKITNYHNTWLHGCTLDGVSVVVDSVDKALSLLLEWNEAGYF</sequence>
<protein>
    <recommendedName>
        <fullName>Pyruvyl transferase 1</fullName>
        <ecNumber>2.-.-.-</ecNumber>
    </recommendedName>
    <alternativeName>
        <fullName>Pyruvylated Gal-beta-1,3-epitope synthesis protein 1</fullName>
        <shortName>PvGal synthesis protein 1</shortName>
    </alternativeName>
</protein>
<gene>
    <name type="primary">pvg1</name>
    <name type="ORF">SPAC8F11.10c</name>
    <name type="ORF">SPACUNK4.18</name>
</gene>